<dbReference type="EC" id="2.1.1.-"/>
<dbReference type="EC" id="3.4.19.12" evidence="6"/>
<dbReference type="EC" id="3.4.22.-"/>
<dbReference type="EC" id="3.6.4.-"/>
<dbReference type="EC" id="2.7.7.48"/>
<dbReference type="EMBL" id="AF265566">
    <property type="protein sequence ID" value="AAK52838.2"/>
    <property type="molecule type" value="Genomic_RNA"/>
</dbReference>
<dbReference type="RefSeq" id="NP_115454.1">
    <property type="nucleotide sequence ID" value="NC_002786.1"/>
</dbReference>
<dbReference type="PDB" id="7MIA">
    <property type="method" value="X-ray"/>
    <property type="resolution" value="1.90 A"/>
    <property type="chains" value="A/B=668-816"/>
</dbReference>
<dbReference type="PDB" id="7MIC">
    <property type="method" value="X-ray"/>
    <property type="resolution" value="2.09 A"/>
    <property type="chains" value="A=668-816"/>
</dbReference>
<dbReference type="PDBsum" id="7MIA"/>
<dbReference type="PDBsum" id="7MIC"/>
<dbReference type="SMR" id="Q91TW9"/>
<dbReference type="KEGG" id="vg:921087"/>
<dbReference type="Proteomes" id="UP000000400">
    <property type="component" value="Segment"/>
</dbReference>
<dbReference type="GO" id="GO:0019028">
    <property type="term" value="C:viral capsid"/>
    <property type="evidence" value="ECO:0007669"/>
    <property type="project" value="UniProtKB-KW"/>
</dbReference>
<dbReference type="GO" id="GO:0005524">
    <property type="term" value="F:ATP binding"/>
    <property type="evidence" value="ECO:0007669"/>
    <property type="project" value="UniProtKB-KW"/>
</dbReference>
<dbReference type="GO" id="GO:0004197">
    <property type="term" value="F:cysteine-type endopeptidase activity"/>
    <property type="evidence" value="ECO:0007669"/>
    <property type="project" value="InterPro"/>
</dbReference>
<dbReference type="GO" id="GO:0008174">
    <property type="term" value="F:mRNA methyltransferase activity"/>
    <property type="evidence" value="ECO:0007669"/>
    <property type="project" value="InterPro"/>
</dbReference>
<dbReference type="GO" id="GO:0003723">
    <property type="term" value="F:RNA binding"/>
    <property type="evidence" value="ECO:0007669"/>
    <property type="project" value="InterPro"/>
</dbReference>
<dbReference type="GO" id="GO:0003724">
    <property type="term" value="F:RNA helicase activity"/>
    <property type="evidence" value="ECO:0007669"/>
    <property type="project" value="UniProtKB-EC"/>
</dbReference>
<dbReference type="GO" id="GO:0003968">
    <property type="term" value="F:RNA-directed RNA polymerase activity"/>
    <property type="evidence" value="ECO:0007669"/>
    <property type="project" value="UniProtKB-KW"/>
</dbReference>
<dbReference type="GO" id="GO:0005198">
    <property type="term" value="F:structural molecule activity"/>
    <property type="evidence" value="ECO:0007669"/>
    <property type="project" value="InterPro"/>
</dbReference>
<dbReference type="GO" id="GO:0006351">
    <property type="term" value="P:DNA-templated transcription"/>
    <property type="evidence" value="ECO:0007669"/>
    <property type="project" value="InterPro"/>
</dbReference>
<dbReference type="GO" id="GO:0032259">
    <property type="term" value="P:methylation"/>
    <property type="evidence" value="ECO:0007669"/>
    <property type="project" value="UniProtKB-KW"/>
</dbReference>
<dbReference type="GO" id="GO:0016556">
    <property type="term" value="P:mRNA modification"/>
    <property type="evidence" value="ECO:0007669"/>
    <property type="project" value="InterPro"/>
</dbReference>
<dbReference type="GO" id="GO:0006508">
    <property type="term" value="P:proteolysis"/>
    <property type="evidence" value="ECO:0007669"/>
    <property type="project" value="UniProtKB-KW"/>
</dbReference>
<dbReference type="GO" id="GO:0006396">
    <property type="term" value="P:RNA processing"/>
    <property type="evidence" value="ECO:0007669"/>
    <property type="project" value="InterPro"/>
</dbReference>
<dbReference type="GO" id="GO:0039648">
    <property type="term" value="P:symbiont-mediated perturbation of host ubiquitin-like protein modification"/>
    <property type="evidence" value="ECO:0007669"/>
    <property type="project" value="UniProtKB-KW"/>
</dbReference>
<dbReference type="GO" id="GO:0039694">
    <property type="term" value="P:viral RNA genome replication"/>
    <property type="evidence" value="ECO:0007669"/>
    <property type="project" value="InterPro"/>
</dbReference>
<dbReference type="CDD" id="cd23247">
    <property type="entry name" value="Tymoviridae_RdRp"/>
    <property type="match status" value="1"/>
</dbReference>
<dbReference type="Gene3D" id="2.60.120.20">
    <property type="match status" value="1"/>
</dbReference>
<dbReference type="Gene3D" id="3.90.70.100">
    <property type="match status" value="1"/>
</dbReference>
<dbReference type="Gene3D" id="3.40.50.300">
    <property type="entry name" value="P-loop containing nucleotide triphosphate hydrolases"/>
    <property type="match status" value="1"/>
</dbReference>
<dbReference type="InterPro" id="IPR027351">
    <property type="entry name" value="(+)RNA_virus_helicase_core_dom"/>
</dbReference>
<dbReference type="InterPro" id="IPR002588">
    <property type="entry name" value="Alphavirus-like_MT_dom"/>
</dbReference>
<dbReference type="InterPro" id="IPR043502">
    <property type="entry name" value="DNA/RNA_pol_sf"/>
</dbReference>
<dbReference type="InterPro" id="IPR027417">
    <property type="entry name" value="P-loop_NTPase"/>
</dbReference>
<dbReference type="InterPro" id="IPR008043">
    <property type="entry name" value="Peptidase_C21"/>
</dbReference>
<dbReference type="InterPro" id="IPR001788">
    <property type="entry name" value="RNA-dep_RNA_pol_alsuvir"/>
</dbReference>
<dbReference type="InterPro" id="IPR007094">
    <property type="entry name" value="RNA-dir_pol_PSvirus"/>
</dbReference>
<dbReference type="InterPro" id="IPR043629">
    <property type="entry name" value="Salyut_dom"/>
</dbReference>
<dbReference type="InterPro" id="IPR000574">
    <property type="entry name" value="Tymo_coat"/>
</dbReference>
<dbReference type="InterPro" id="IPR043181">
    <property type="entry name" value="TYMV_endopept_dom"/>
</dbReference>
<dbReference type="InterPro" id="IPR029053">
    <property type="entry name" value="Viral_coat"/>
</dbReference>
<dbReference type="Pfam" id="PF05381">
    <property type="entry name" value="Peptidase_C21"/>
    <property type="match status" value="1"/>
</dbReference>
<dbReference type="Pfam" id="PF00978">
    <property type="entry name" value="RdRP_2"/>
    <property type="match status" value="1"/>
</dbReference>
<dbReference type="Pfam" id="PF19227">
    <property type="entry name" value="Salyut"/>
    <property type="match status" value="1"/>
</dbReference>
<dbReference type="Pfam" id="PF00983">
    <property type="entry name" value="Tymo_coat"/>
    <property type="match status" value="1"/>
</dbReference>
<dbReference type="Pfam" id="PF01443">
    <property type="entry name" value="Viral_helicase1"/>
    <property type="match status" value="1"/>
</dbReference>
<dbReference type="Pfam" id="PF01660">
    <property type="entry name" value="Vmethyltransf"/>
    <property type="match status" value="1"/>
</dbReference>
<dbReference type="SUPFAM" id="SSF56672">
    <property type="entry name" value="DNA/RNA polymerases"/>
    <property type="match status" value="1"/>
</dbReference>
<dbReference type="SUPFAM" id="SSF88633">
    <property type="entry name" value="Positive stranded ssRNA viruses"/>
    <property type="match status" value="1"/>
</dbReference>
<dbReference type="PROSITE" id="PS51743">
    <property type="entry name" value="ALPHAVIRUS_MT"/>
    <property type="match status" value="1"/>
</dbReference>
<dbReference type="PROSITE" id="PS51738">
    <property type="entry name" value="PEPTIDASE_C21"/>
    <property type="match status" value="1"/>
</dbReference>
<dbReference type="PROSITE" id="PS51657">
    <property type="entry name" value="PSRV_HELICASE"/>
    <property type="match status" value="1"/>
</dbReference>
<dbReference type="PROSITE" id="PS50507">
    <property type="entry name" value="RDRP_SSRNA_POS"/>
    <property type="match status" value="1"/>
</dbReference>
<keyword id="KW-0002">3D-structure</keyword>
<keyword id="KW-0877">Alternative promoter usage</keyword>
<keyword id="KW-0067">ATP-binding</keyword>
<keyword id="KW-0167">Capsid protein</keyword>
<keyword id="KW-0945">Host-virus interaction</keyword>
<keyword id="KW-0378">Hydrolase</keyword>
<keyword id="KW-0489">Methyltransferase</keyword>
<keyword id="KW-1127">Modulation of host ubiquitin pathway by viral deubiquitinase</keyword>
<keyword id="KW-1130">Modulation of host ubiquitin pathway by virus</keyword>
<keyword id="KW-0511">Multifunctional enzyme</keyword>
<keyword id="KW-0547">Nucleotide-binding</keyword>
<keyword id="KW-0548">Nucleotidyltransferase</keyword>
<keyword id="KW-0645">Protease</keyword>
<keyword id="KW-1185">Reference proteome</keyword>
<keyword id="KW-0696">RNA-directed RNA polymerase</keyword>
<keyword id="KW-0788">Thiol protease</keyword>
<keyword id="KW-0808">Transferase</keyword>
<keyword id="KW-0693">Viral RNA replication</keyword>
<keyword id="KW-0946">Virion</keyword>
<comment type="function">
    <molecule>Methyltransferase/Protease/Ubiquitinyl hydrolase</molecule>
    <text evidence="1 6">Acts as a cysteine protease, methyltransferase and deubiquitinase (PubMed:34265303). The cysteine protease activity cleaves the polyprotein giving rise to mature proteins (PubMed:34265303). The methyltransferase domain is probably involved in viral RNA capping (By similarity). The deubiquitylating activity counteracts the degradation of the viral polymerase mediated by the host ubiquitin-proteasome system (By similarity). The polymerase is thus stabilized and infectivity is increased (By similarity).</text>
</comment>
<comment type="function">
    <molecule>RNA-directed RNA polymerase</molecule>
    <text evidence="1">RNA-directed RNA polymerase is responsible for the replication and transcription of the genome.</text>
</comment>
<comment type="function">
    <molecule>Capsid protein CP1</molecule>
    <text evidence="7">Capsid protein CP1 and CP2 assemble to form an icosahedral capsid, about 30 nm in diameter, and consisting of capsid proteins CP1 and CP2 in a 1:3 ratio. The capsid encapsulates the single-stranded RNA genome. While CP1 is produced as a C-terminal fusion of the replication protein, CP2 may be expressed from a 3'-co-terminal subgenomic RNA.</text>
</comment>
<comment type="function">
    <molecule>Isoform Subgenomic capsid protein CP2</molecule>
    <text evidence="7">Capsid protein CP1 and CP2 assemble to form an icosahedral capsid, about 30 nm in diameter, and consisting of capsid proteins CP1 and CP2 in a 1:3 ratio. The capsid encapsulates the single-stranded RNA genome. While CP1 is produced as a C-terminal fusion of the replication protein, CP2 may be expressed from a 3'-co-terminal subgenomic RNA.</text>
</comment>
<comment type="catalytic activity">
    <molecule>RNA-directed RNA polymerase</molecule>
    <reaction evidence="2">
        <text>RNA(n) + a ribonucleoside 5'-triphosphate = RNA(n+1) + diphosphate</text>
        <dbReference type="Rhea" id="RHEA:21248"/>
        <dbReference type="Rhea" id="RHEA-COMP:14527"/>
        <dbReference type="Rhea" id="RHEA-COMP:17342"/>
        <dbReference type="ChEBI" id="CHEBI:33019"/>
        <dbReference type="ChEBI" id="CHEBI:61557"/>
        <dbReference type="ChEBI" id="CHEBI:140395"/>
        <dbReference type="EC" id="2.7.7.48"/>
    </reaction>
</comment>
<comment type="catalytic activity">
    <molecule>Methyltransferase/Protease/Ubiquitinyl hydrolase</molecule>
    <reaction evidence="6">
        <text>Thiol-dependent hydrolysis of ester, thioester, amide, peptide and isopeptide bonds formed by the C-terminal Gly of ubiquitin (a 76-residue protein attached to proteins as an intracellular targeting signal).</text>
        <dbReference type="EC" id="3.4.19.12"/>
    </reaction>
</comment>
<comment type="subcellular location">
    <molecule>Capsid protein CP1</molecule>
    <subcellularLocation>
        <location evidence="8">Virion</location>
    </subcellularLocation>
</comment>
<comment type="alternative products">
    <event type="alternative promoter"/>
    <isoform>
        <id>Q91TW9-1</id>
        <name>Genome polyprotein</name>
        <sequence type="displayed"/>
    </isoform>
    <isoform>
        <id>Q91TW9-2</id>
        <name>Subgenomic capsid protein CP2</name>
        <sequence type="described" ref="VSP_040286"/>
    </isoform>
</comment>
<comment type="domain">
    <molecule>Methyltransferase/Protease/Ubiquitinyl hydrolase</molecule>
    <text evidence="9">The viral OTU domain (vOTU) is responsible for the deubiquitination activity.</text>
</comment>
<comment type="PTM">
    <text evidence="6">Specific enzymatic cleavages by the host yield mature proteins.</text>
</comment>
<comment type="similarity">
    <text evidence="8">Belongs to the Tymoviridae non-structural replication polyprotein family.</text>
</comment>
<organismHost>
    <name type="scientific">Zea mays</name>
    <name type="common">Maize</name>
    <dbReference type="NCBI Taxonomy" id="4577"/>
</organismHost>
<reference key="1">
    <citation type="journal article" date="2001" name="Virology">
        <title>Molecular characterization of the genome of Maize rayado fino virus, the type member of the genus Marafivirus.</title>
        <authorList>
            <person name="Hammond R.W."/>
            <person name="Ramirez P."/>
        </authorList>
    </citation>
    <scope>NUCLEOTIDE SEQUENCE [GENOMIC RNA]</scope>
</reference>
<reference key="2">
    <citation type="submission" date="2019-07" db="EMBL/GenBank/DDBJ databases">
        <authorList>
            <person name="Hammond R.W."/>
            <person name="Ramirez P."/>
        </authorList>
    </citation>
    <scope>SEQUENCE REVISION</scope>
</reference>
<reference key="3">
    <citation type="journal article" date="1986" name="Intervirology">
        <title>The two capsid proteins of maize rayado fino virus contain common peptide sequences.</title>
        <authorList>
            <person name="Falk B.W."/>
            <person name="Tsai J.H."/>
        </authorList>
    </citation>
    <scope>FUNCTION (CAPSID PROTEIN CP1)</scope>
    <scope>IDENTIFICATION OF SUBGENOMIC CAPSID PROTEIN CP2</scope>
</reference>
<reference evidence="10 11" key="4">
    <citation type="journal article" date="2021" name="J. Biol. Chem.">
        <title>The endopeptidase of the maize-affecting Marafivirus type member maize rayado fino virus doubles as a deubiquitinase.</title>
        <authorList>
            <person name="Patel A."/>
            <person name="McBride J.A.M."/>
            <person name="Mark B.L."/>
        </authorList>
    </citation>
    <scope>X-RAY CRYSTALLOGRAPHY (1.90 ANGSTROMS) OF 667-815 IN COMPLEX WITH UBIQUITIN</scope>
    <scope>CATALYTIC ACTIVITY (METHYLTRANSFERASE/PROTEASE/UBIQUITINYL HYDROLASE)</scope>
    <scope>FUNCTION (METHYLTRANSFERASE/PROTEASE/UBIQUITINYL HYDROLASE)</scope>
    <scope>PROTEOLYTIC CLEAVAGE (GENOME POLYPROTEIN)</scope>
</reference>
<protein>
    <recommendedName>
        <fullName>Genome polyprotein</fullName>
    </recommendedName>
    <component>
        <recommendedName>
            <fullName>Methyltransferase/Protease/Ubiquitinyl hydrolase</fullName>
            <ecNumber>2.1.1.-</ecNumber>
            <ecNumber evidence="6">3.4.19.12</ecNumber>
            <ecNumber>3.4.22.-</ecNumber>
        </recommendedName>
        <alternativeName>
            <fullName>MET/PRO</fullName>
        </alternativeName>
    </component>
    <component>
        <recommendedName>
            <fullName>Putative helicase</fullName>
            <ecNumber>3.6.4.-</ecNumber>
        </recommendedName>
        <alternativeName>
            <fullName>HEL</fullName>
        </alternativeName>
    </component>
    <component>
        <recommendedName>
            <fullName>RNA-directed RNA polymerase</fullName>
            <ecNumber>2.7.7.48</ecNumber>
        </recommendedName>
        <alternativeName>
            <fullName>POL</fullName>
        </alternativeName>
    </component>
    <component>
        <recommendedName>
            <fullName>Capsid protein CP1</fullName>
            <shortName>CP1</shortName>
        </recommendedName>
        <alternativeName>
            <fullName>Coat protein</fullName>
        </alternativeName>
    </component>
</protein>
<feature type="chain" id="PRO_0000402496" description="Genome polyprotein">
    <location>
        <begin position="1"/>
        <end position="2028"/>
    </location>
</feature>
<feature type="chain" id="PRO_0000402497" description="Methyltransferase/Protease/Ubiquitinyl hydrolase">
    <location>
        <begin position="1"/>
        <end position="822"/>
    </location>
</feature>
<feature type="chain" id="PRO_0000460994" description="Putative helicase">
    <location>
        <begin position="823"/>
        <end position="1194"/>
    </location>
</feature>
<feature type="chain" id="PRO_0000460995" description="RNA-directed RNA polymerase">
    <location>
        <begin position="1195"/>
        <end position="1790"/>
    </location>
</feature>
<feature type="chain" id="PRO_0000402498" description="Capsid protein CP1">
    <location>
        <begin position="1791"/>
        <end position="2028"/>
    </location>
</feature>
<feature type="domain" description="Alphavirus-like MT" evidence="4">
    <location>
        <begin position="65"/>
        <end position="226"/>
    </location>
</feature>
<feature type="domain" description="Peptidase C21" evidence="3">
    <location>
        <begin position="669"/>
        <end position="824"/>
    </location>
</feature>
<feature type="domain" description="(+)RNA virus helicase ATP-binding">
    <location>
        <begin position="882"/>
        <end position="1039"/>
    </location>
</feature>
<feature type="domain" description="(+)RNA virus helicase C-terminal">
    <location>
        <begin position="1040"/>
        <end position="1172"/>
    </location>
</feature>
<feature type="domain" description="RdRp catalytic" evidence="2">
    <location>
        <begin position="1508"/>
        <end position="1614"/>
    </location>
</feature>
<feature type="region of interest" description="Disordered" evidence="5">
    <location>
        <begin position="544"/>
        <end position="603"/>
    </location>
</feature>
<feature type="region of interest" description="Disordered" evidence="5">
    <location>
        <begin position="661"/>
        <end position="682"/>
    </location>
</feature>
<feature type="region of interest" description="Disordered" evidence="5">
    <location>
        <begin position="1828"/>
        <end position="1854"/>
    </location>
</feature>
<feature type="compositionally biased region" description="Pro residues" evidence="5">
    <location>
        <begin position="550"/>
        <end position="599"/>
    </location>
</feature>
<feature type="compositionally biased region" description="Basic and acidic residues" evidence="5">
    <location>
        <begin position="668"/>
        <end position="677"/>
    </location>
</feature>
<feature type="active site" description="For protease activity" evidence="3">
    <location>
        <position position="723"/>
    </location>
</feature>
<feature type="active site" description="For protease activity" evidence="3">
    <location>
        <position position="806"/>
    </location>
</feature>
<feature type="site" description="Cleavage; by viral protease" evidence="1">
    <location>
        <begin position="822"/>
        <end position="823"/>
    </location>
</feature>
<feature type="site" description="Cleavage; by viral protease" evidence="1">
    <location>
        <begin position="1194"/>
        <end position="1195"/>
    </location>
</feature>
<feature type="site" description="Cleavage; by viral protease" evidence="1">
    <location>
        <begin position="1790"/>
        <end position="1791"/>
    </location>
</feature>
<feature type="splice variant" id="VSP_040286" description="In isoform Subgenomic capsid protein CP2." evidence="8">
    <location>
        <begin position="1"/>
        <end position="1828"/>
    </location>
</feature>
<feature type="helix" evidence="12">
    <location>
        <begin position="673"/>
        <end position="677"/>
    </location>
</feature>
<feature type="strand" evidence="12">
    <location>
        <begin position="681"/>
        <end position="687"/>
    </location>
</feature>
<feature type="helix" evidence="12">
    <location>
        <begin position="688"/>
        <end position="691"/>
    </location>
</feature>
<feature type="turn" evidence="12">
    <location>
        <begin position="698"/>
        <end position="701"/>
    </location>
</feature>
<feature type="strand" evidence="12">
    <location>
        <begin position="703"/>
        <end position="708"/>
    </location>
</feature>
<feature type="helix" evidence="13">
    <location>
        <begin position="719"/>
        <end position="721"/>
    </location>
</feature>
<feature type="helix" evidence="12">
    <location>
        <begin position="723"/>
        <end position="732"/>
    </location>
</feature>
<feature type="helix" evidence="12">
    <location>
        <begin position="736"/>
        <end position="746"/>
    </location>
</feature>
<feature type="helix" evidence="12">
    <location>
        <begin position="749"/>
        <end position="752"/>
    </location>
</feature>
<feature type="helix" evidence="12">
    <location>
        <begin position="757"/>
        <end position="760"/>
    </location>
</feature>
<feature type="helix" evidence="12">
    <location>
        <begin position="764"/>
        <end position="774"/>
    </location>
</feature>
<feature type="strand" evidence="12">
    <location>
        <begin position="776"/>
        <end position="782"/>
    </location>
</feature>
<feature type="strand" evidence="12">
    <location>
        <begin position="785"/>
        <end position="791"/>
    </location>
</feature>
<feature type="strand" evidence="12">
    <location>
        <begin position="795"/>
        <end position="801"/>
    </location>
</feature>
<feature type="strand" evidence="13">
    <location>
        <begin position="806"/>
        <end position="812"/>
    </location>
</feature>
<organism>
    <name type="scientific">Maize rayado fino virus (isolate Costa Rica/Guapiles)</name>
    <name type="common">MRFV</name>
    <dbReference type="NCBI Taxonomy" id="652669"/>
    <lineage>
        <taxon>Viruses</taxon>
        <taxon>Riboviria</taxon>
        <taxon>Orthornavirae</taxon>
        <taxon>Kitrinoviricota</taxon>
        <taxon>Alsuviricetes</taxon>
        <taxon>Tymovirales</taxon>
        <taxon>Tymoviridae</taxon>
        <taxon>Marafivirus</taxon>
        <taxon>Marafivirus maydis</taxon>
    </lineage>
</organism>
<proteinExistence type="evidence at protein level"/>
<evidence type="ECO:0000250" key="1">
    <source>
        <dbReference type="UniProtKB" id="P10358"/>
    </source>
</evidence>
<evidence type="ECO:0000255" key="2">
    <source>
        <dbReference type="PROSITE-ProRule" id="PRU00539"/>
    </source>
</evidence>
<evidence type="ECO:0000255" key="3">
    <source>
        <dbReference type="PROSITE-ProRule" id="PRU01074"/>
    </source>
</evidence>
<evidence type="ECO:0000255" key="4">
    <source>
        <dbReference type="PROSITE-ProRule" id="PRU01079"/>
    </source>
</evidence>
<evidence type="ECO:0000256" key="5">
    <source>
        <dbReference type="SAM" id="MobiDB-lite"/>
    </source>
</evidence>
<evidence type="ECO:0000269" key="6">
    <source>
    </source>
</evidence>
<evidence type="ECO:0000269" key="7">
    <source>
    </source>
</evidence>
<evidence type="ECO:0000305" key="8"/>
<evidence type="ECO:0000305" key="9">
    <source>
    </source>
</evidence>
<evidence type="ECO:0007744" key="10">
    <source>
        <dbReference type="PDB" id="7MIA"/>
    </source>
</evidence>
<evidence type="ECO:0007744" key="11">
    <source>
        <dbReference type="PDB" id="7MIC"/>
    </source>
</evidence>
<evidence type="ECO:0007829" key="12">
    <source>
        <dbReference type="PDB" id="7MIA"/>
    </source>
</evidence>
<evidence type="ECO:0007829" key="13">
    <source>
        <dbReference type="PDB" id="7MIC"/>
    </source>
</evidence>
<gene>
    <name type="ORF">ORF1</name>
</gene>
<sequence length="2028" mass="223184">MSSFLRGGHLLSGVESLTPTTHRDTITAPIVESLATPLRRSLERYPWSIPKEFHSFLHTCGVDISGFGHAAHPHPVHKTIETHLLLDVWPNYARGPSDVMFIKPEKFAKLQSRQPNFAHLINYRLVPKDTTRYPSTSTNLPDCETVFMHDALMYYTPGQIADLFFLCPQLQKIYASVVVPAESSFTHLSLHPELYRFRFQGSDLVYEPEGNPAANYTQPRSALDWLQTTGFTVGHEFFSVTLLDSFGPVHSLLIQRGRPPVFQAEDIASFRVPDAVALPAPASLHQDLRHRLVPRKVYDALFNYVRAVRTLRVTDPAGFVRTQVGKPEYSWVTSSAWDNLQHFALQTAAVRPNTSHPLFQSPFARLSHWLRTHTWALWCLASPSASVSAWATASALGRLLPLHTDRLRLFGFDIIGRRFWPRLPFHGPEPRFLWETHPACRPPVLFADSAFECQILAGLANRCSPSPFWSRLFPTASPPSWVAYSALALAAVPLAALALRWFYGPDSPQALHDQYHATFHPDPWTLDLPRRLRRFERESFMRTGSAPLPLSLPPPEGSLLPVEPPLAPSDPEPALEPSPPAASVPAPAPAPASEPPPSPESVAPPVAVVAPAVQPARAPSPSPALLGAELRFGDLPPVSAWDSDPEISKLGESTQGTVFAVTPGPRAPEPDTARLDADPSASGPVMEFRELQKGAYIEPTGAFLTRARNSVSSSIPYPTRAACLLVAVSQATGLPTRTLWAALCANLPDSVLDDGSLATLGLTTDHFAVLARIFSLRCRFVSEHGDVELGLHDATSRFTIRHTPGHFELVADNFSLPALVGASSVPGADLAEACKRFVAPDRTVLPFRDVHIHRTDVRRAKNLISNMKNGFDGVMAQANPLDPKSARERFLMLDSCLDIAAPRRVRLIHIAGFAGCGKSWPISHLLRTPAFRVFKLAVPTTELRDEWKALMDPRDQDKWRFGTWESSLLKTARVLVIDEVYKMPRGYLDLAIHADAAIQFVILLGDPIQGEYHSTHPSSSNARLSPEHRYLRPYVDFYCFWSRRIPQNVARVLDVPTTSTEMGFARYSQQFPFFGKILISARDSAKSLADCGYHAVTIASSQGSTIAGPAYVHLDNHSRRLSHQHSLVAITRSKSGIVFTGDKAAADGTSSANLLFSAVLLDRRLSVRSLFSALLPCCPFVTEPPTSRAVLLRGAGYGVARPLRARDAPPLGPDYVGDVILDSSAPILGDGSANAPQVSTHFLPETRRPLHFDIPSARHQVADHPLAPDHSACAIEPVYPGESFESLASLFLPPTDAESKETYFRGEMSNQFPHLDKPFELGAQTSSLLAPLHNSKHDPTLLPASIGKRLRFRHSEAPYVIAPRDEILGSLLYAAACRAYHRSPRDVEPFDPDLYAECINLNEFAQLSSKTQATIMANANRSDPDWRWSAVRIFAKTQHKVNEGSLFGSWKACQTLALMHDAVVLLLGPVKKYQRFFDQRDRPSTLYVHAGHTPFEMADWCRAHLTPAVKLANDYTAFDQSQHGEAVVFERYKMNRLSIPAELVDLHVYLKTNVSTQFGPLTCMRLTGEPGTYDDNTDYNIAVLHLEYAVGSTPLMVSGDDSLLDSEPPVRDQWSAIAPMLALTFKKERGRYATFCGYYVGFTGAVRSPPALFAKLMIAVDDGSISDKLIAYLTEFTVGHSSGDAFWTILPVEAVPYQSACFDFFCRRAPAQAKVMLRLGEAPESLLSLAFEGLKWASHSVYALMNSSHRRQLLHSSRRPRSLPEDPEVSQLQGELLHQFQSLHLPLRGGHMPNPLAALFRLLQQSSSLGPTYAVAPIARAPQVLPPSMADNATQVGPVPPRDDRVDRQPPLPDPPRVLETAPSHFLDLPFQWKVTDFTGYAAYHGTDDLSASAVLTTLCAPYRHAELLYVEISVAPCPPSFSKPIMFTVVWTPATLSPADGKETDYYGGRQITVGGPVMLSSTTAVPADLARMNPFIKSSVSYNDTPRWTMSVPAVTGGDTKIPLATAFVRGIVRVSAPSGAATPSA</sequence>
<accession>Q91TW9</accession>
<name>POLG_MRFVC</name>